<evidence type="ECO:0000255" key="1">
    <source>
        <dbReference type="HAMAP-Rule" id="MF_00385"/>
    </source>
</evidence>
<evidence type="ECO:0000305" key="2"/>
<accession>Q1WU95</accession>
<comment type="similarity">
    <text evidence="1">Belongs to the bacterial ribosomal protein bS16 family.</text>
</comment>
<dbReference type="EMBL" id="CP000233">
    <property type="protein sequence ID" value="ABD99440.1"/>
    <property type="molecule type" value="Genomic_DNA"/>
</dbReference>
<dbReference type="RefSeq" id="WP_003699989.1">
    <property type="nucleotide sequence ID" value="NC_007929.1"/>
</dbReference>
<dbReference type="RefSeq" id="YP_535523.1">
    <property type="nucleotide sequence ID" value="NC_007929.1"/>
</dbReference>
<dbReference type="SMR" id="Q1WU95"/>
<dbReference type="STRING" id="362948.LSL_0630"/>
<dbReference type="DNASU" id="3977300"/>
<dbReference type="GeneID" id="89465422"/>
<dbReference type="KEGG" id="lsl:LSL_0630"/>
<dbReference type="PATRIC" id="fig|362948.14.peg.710"/>
<dbReference type="HOGENOM" id="CLU_100590_5_0_9"/>
<dbReference type="OrthoDB" id="9807878at2"/>
<dbReference type="Proteomes" id="UP000006559">
    <property type="component" value="Chromosome"/>
</dbReference>
<dbReference type="GO" id="GO:0005737">
    <property type="term" value="C:cytoplasm"/>
    <property type="evidence" value="ECO:0007669"/>
    <property type="project" value="UniProtKB-ARBA"/>
</dbReference>
<dbReference type="GO" id="GO:0015935">
    <property type="term" value="C:small ribosomal subunit"/>
    <property type="evidence" value="ECO:0007669"/>
    <property type="project" value="TreeGrafter"/>
</dbReference>
<dbReference type="GO" id="GO:0003735">
    <property type="term" value="F:structural constituent of ribosome"/>
    <property type="evidence" value="ECO:0007669"/>
    <property type="project" value="InterPro"/>
</dbReference>
<dbReference type="GO" id="GO:0006412">
    <property type="term" value="P:translation"/>
    <property type="evidence" value="ECO:0007669"/>
    <property type="project" value="UniProtKB-UniRule"/>
</dbReference>
<dbReference type="FunFam" id="3.30.1320.10:FF:000002">
    <property type="entry name" value="30S ribosomal protein S16"/>
    <property type="match status" value="1"/>
</dbReference>
<dbReference type="Gene3D" id="3.30.1320.10">
    <property type="match status" value="1"/>
</dbReference>
<dbReference type="HAMAP" id="MF_00385">
    <property type="entry name" value="Ribosomal_bS16"/>
    <property type="match status" value="1"/>
</dbReference>
<dbReference type="InterPro" id="IPR000307">
    <property type="entry name" value="Ribosomal_bS16"/>
</dbReference>
<dbReference type="InterPro" id="IPR023803">
    <property type="entry name" value="Ribosomal_bS16_dom_sf"/>
</dbReference>
<dbReference type="NCBIfam" id="TIGR00002">
    <property type="entry name" value="S16"/>
    <property type="match status" value="1"/>
</dbReference>
<dbReference type="PANTHER" id="PTHR12919">
    <property type="entry name" value="30S RIBOSOMAL PROTEIN S16"/>
    <property type="match status" value="1"/>
</dbReference>
<dbReference type="PANTHER" id="PTHR12919:SF20">
    <property type="entry name" value="SMALL RIBOSOMAL SUBUNIT PROTEIN BS16M"/>
    <property type="match status" value="1"/>
</dbReference>
<dbReference type="Pfam" id="PF00886">
    <property type="entry name" value="Ribosomal_S16"/>
    <property type="match status" value="1"/>
</dbReference>
<dbReference type="SUPFAM" id="SSF54565">
    <property type="entry name" value="Ribosomal protein S16"/>
    <property type="match status" value="1"/>
</dbReference>
<protein>
    <recommendedName>
        <fullName evidence="1">Small ribosomal subunit protein bS16</fullName>
    </recommendedName>
    <alternativeName>
        <fullName evidence="2">30S ribosomal protein S16</fullName>
    </alternativeName>
</protein>
<feature type="chain" id="PRO_1000049279" description="Small ribosomal subunit protein bS16">
    <location>
        <begin position="1"/>
        <end position="91"/>
    </location>
</feature>
<proteinExistence type="inferred from homology"/>
<organism>
    <name type="scientific">Ligilactobacillus salivarius (strain UCC118)</name>
    <name type="common">Lactobacillus salivarius</name>
    <dbReference type="NCBI Taxonomy" id="362948"/>
    <lineage>
        <taxon>Bacteria</taxon>
        <taxon>Bacillati</taxon>
        <taxon>Bacillota</taxon>
        <taxon>Bacilli</taxon>
        <taxon>Lactobacillales</taxon>
        <taxon>Lactobacillaceae</taxon>
        <taxon>Ligilactobacillus</taxon>
    </lineage>
</organism>
<gene>
    <name evidence="1" type="primary">rpsP</name>
    <name type="ordered locus">LSL_0630</name>
</gene>
<keyword id="KW-1185">Reference proteome</keyword>
<keyword id="KW-0687">Ribonucleoprotein</keyword>
<keyword id="KW-0689">Ribosomal protein</keyword>
<sequence>MSVKIRLKRMGSKKRPFYRIVVADSRSPRDGRFIETVGTYNPLTDPETVTLKEEKVMNWLNNGAQPSDTVRNILSRNGVMKKFHEAKFSKK</sequence>
<name>RS16_LIGS1</name>
<reference key="1">
    <citation type="journal article" date="2006" name="Proc. Natl. Acad. Sci. U.S.A.">
        <title>Multireplicon genome architecture of Lactobacillus salivarius.</title>
        <authorList>
            <person name="Claesson M.J."/>
            <person name="Li Y."/>
            <person name="Leahy S."/>
            <person name="Canchaya C."/>
            <person name="van Pijkeren J.P."/>
            <person name="Cerdeno-Tarraga A.M."/>
            <person name="Parkhill J."/>
            <person name="Flynn S."/>
            <person name="O'Sullivan G.C."/>
            <person name="Collins J.K."/>
            <person name="Higgins D."/>
            <person name="Shanahan F."/>
            <person name="Fitzgerald G.F."/>
            <person name="van Sinderen D."/>
            <person name="O'Toole P.W."/>
        </authorList>
    </citation>
    <scope>NUCLEOTIDE SEQUENCE [LARGE SCALE GENOMIC DNA]</scope>
    <source>
        <strain>UCC118</strain>
    </source>
</reference>